<proteinExistence type="inferred from homology"/>
<reference key="1">
    <citation type="journal article" date="2002" name="J. Bacteriol.">
        <title>Mosaic structure and molecular evolution of the leukotoxin operon (lktCABD) in Mannheimia (Pasteurella) haemolytica, Mannheimia glucosida, and Pasteurella trehalosi.</title>
        <authorList>
            <person name="Davies R.L."/>
            <person name="Campbell S."/>
            <person name="Whittam T.S."/>
        </authorList>
    </citation>
    <scope>NUCLEOTIDE SEQUENCE [GENOMIC DNA]</scope>
    <source>
        <strain>Serotype A1 / PH2</strain>
    </source>
</reference>
<comment type="function">
    <text evidence="5">Part of the ABC transporter complex LktBD involved in leukotoxin export. Transmembrane domains (TMD) form a pore in the inner membrane and the ATP-binding domain (NBD) is responsible for energy generation (Probable).</text>
</comment>
<comment type="catalytic activity">
    <reaction>
        <text>ATP + H2O + proteinSide 1 = ADP + phosphate + proteinSide 2.</text>
        <dbReference type="EC" id="7.4.2.5"/>
    </reaction>
</comment>
<comment type="subunit">
    <text evidence="1">Homodimer.</text>
</comment>
<comment type="subcellular location">
    <subcellularLocation>
        <location evidence="5">Cell inner membrane</location>
        <topology evidence="5">Multi-pass membrane protein</topology>
    </subcellularLocation>
</comment>
<comment type="domain">
    <text>In LktB the peptidase C39 domain, the ATP-binding domain (NBD) and the transmembrane domain (TMD) are fused.</text>
</comment>
<comment type="similarity">
    <text evidence="5">Belongs to the ABC transporter superfamily. Protein-1 exporter (TC 3.A.1.109) family.</text>
</comment>
<comment type="caution">
    <text evidence="5">Leu-10 is present instead of the conserved Cys which is expected to be the active site residue of peptidase C39. Thus this protein is presumed to be without peptidase activity.</text>
</comment>
<sequence length="708" mass="79697">MEANHQRNDLGLVALTMLAQYHNISLNPEEIKHKFDLDGKGLSLTAWLLAAKSLALKAKHIKKEISRLHLVNLPALVWQDNGKHFLLVKVDTDNNRYLTYNLEQDAPQILSQDEFEACYQGQLILVTSRASVVGQLAKFDFTWFIPAVIKYRKIFLETLIVSIFLQIFALITPLFFQVVMDKVLVHRGFSTLNIITVALAIVIIFEIVLSGLRTYVFSHSTSRIDVELGAKLFRHLLSLPISYFENRRVGDTVARVRELDQIRNFLTGQALTSVLDLLFSFIFFAVMWYYSPKLTLVILGSLPCYILWSIFISPILRRRLDEKFARSADNQAFLVESVTAINMIKAMAVAPQMTDTWDKQLASYVSSSFRVTVLATIGQQGVQLIQKTVMVINLWLGAHLVISGDLSIGQLIAFNMLSGQVIAPVIRLAQLWQDFQQVGISVTRLGDVLNSPTEQYQGKLSLPEIKGDISFKNIRFRYKPDAPTILNNVNLEIRQGEVIGIVGRSGSGKSTLTKLLQRFYIPENGQVLIDGHDLALADPNWLRRQIGVVLQDNVLLNRSIRENIALSDPGMPMERVIYAAKLAGAHDFISELREGYNTIVGEQGAGLSGGQRQRIAIARALVNNPKILIFDEATSALDYESEHIIMQNMQKICQGRTVILIAHRLSTVKNADRIIVMEKGEIVEQGKHHELLQNSNGLYSYLHQLQLN</sequence>
<name>LKB1B_MANHA</name>
<accession>Q93FH6</accession>
<keyword id="KW-0067">ATP-binding</keyword>
<keyword id="KW-0997">Cell inner membrane</keyword>
<keyword id="KW-1003">Cell membrane</keyword>
<keyword id="KW-0472">Membrane</keyword>
<keyword id="KW-0547">Nucleotide-binding</keyword>
<keyword id="KW-1278">Translocase</keyword>
<keyword id="KW-0812">Transmembrane</keyword>
<keyword id="KW-1133">Transmembrane helix</keyword>
<keyword id="KW-0813">Transport</keyword>
<protein>
    <recommendedName>
        <fullName>Leukotoxin translocation ATP-binding protein LktB</fullName>
        <ecNumber>7.4.2.5</ecNumber>
    </recommendedName>
</protein>
<dbReference type="EC" id="7.4.2.5"/>
<dbReference type="EMBL" id="AF314503">
    <property type="protein sequence ID" value="AAL12767.1"/>
    <property type="molecule type" value="Genomic_DNA"/>
</dbReference>
<dbReference type="RefSeq" id="WP_006248024.1">
    <property type="nucleotide sequence ID" value="NZ_VAJK01000035.1"/>
</dbReference>
<dbReference type="SMR" id="Q93FH6"/>
<dbReference type="STRING" id="75985.WC39_13375"/>
<dbReference type="OrthoDB" id="6828292at2"/>
<dbReference type="GO" id="GO:0005886">
    <property type="term" value="C:plasma membrane"/>
    <property type="evidence" value="ECO:0007669"/>
    <property type="project" value="UniProtKB-SubCell"/>
</dbReference>
<dbReference type="GO" id="GO:0030256">
    <property type="term" value="C:type I protein secretion system complex"/>
    <property type="evidence" value="ECO:0007669"/>
    <property type="project" value="InterPro"/>
</dbReference>
<dbReference type="GO" id="GO:0140359">
    <property type="term" value="F:ABC-type transporter activity"/>
    <property type="evidence" value="ECO:0007669"/>
    <property type="project" value="InterPro"/>
</dbReference>
<dbReference type="GO" id="GO:0005524">
    <property type="term" value="F:ATP binding"/>
    <property type="evidence" value="ECO:0007669"/>
    <property type="project" value="UniProtKB-KW"/>
</dbReference>
<dbReference type="GO" id="GO:0016887">
    <property type="term" value="F:ATP hydrolysis activity"/>
    <property type="evidence" value="ECO:0007669"/>
    <property type="project" value="InterPro"/>
</dbReference>
<dbReference type="GO" id="GO:0034040">
    <property type="term" value="F:ATPase-coupled lipid transmembrane transporter activity"/>
    <property type="evidence" value="ECO:0007669"/>
    <property type="project" value="TreeGrafter"/>
</dbReference>
<dbReference type="GO" id="GO:0030253">
    <property type="term" value="P:protein secretion by the type I secretion system"/>
    <property type="evidence" value="ECO:0007669"/>
    <property type="project" value="InterPro"/>
</dbReference>
<dbReference type="GO" id="GO:0006508">
    <property type="term" value="P:proteolysis"/>
    <property type="evidence" value="ECO:0007669"/>
    <property type="project" value="InterPro"/>
</dbReference>
<dbReference type="CDD" id="cd18588">
    <property type="entry name" value="ABC_6TM_CyaB_HlyB_like"/>
    <property type="match status" value="1"/>
</dbReference>
<dbReference type="CDD" id="cd03252">
    <property type="entry name" value="ABCC_Hemolysin"/>
    <property type="match status" value="1"/>
</dbReference>
<dbReference type="CDD" id="cd02417">
    <property type="entry name" value="Peptidase_C39_likeA"/>
    <property type="match status" value="1"/>
</dbReference>
<dbReference type="FunFam" id="3.40.50.300:FF:000299">
    <property type="entry name" value="ABC transporter ATP-binding protein/permease"/>
    <property type="match status" value="1"/>
</dbReference>
<dbReference type="FunFam" id="1.20.1560.10:FF:000056">
    <property type="entry name" value="Alpha-hemolysin translocation ATP-binding protein HlyB"/>
    <property type="match status" value="1"/>
</dbReference>
<dbReference type="Gene3D" id="1.20.1560.10">
    <property type="entry name" value="ABC transporter type 1, transmembrane domain"/>
    <property type="match status" value="1"/>
</dbReference>
<dbReference type="Gene3D" id="3.90.70.10">
    <property type="entry name" value="Cysteine proteinases"/>
    <property type="match status" value="1"/>
</dbReference>
<dbReference type="Gene3D" id="3.40.50.300">
    <property type="entry name" value="P-loop containing nucleotide triphosphate hydrolases"/>
    <property type="match status" value="1"/>
</dbReference>
<dbReference type="InterPro" id="IPR003593">
    <property type="entry name" value="AAA+_ATPase"/>
</dbReference>
<dbReference type="InterPro" id="IPR011527">
    <property type="entry name" value="ABC1_TM_dom"/>
</dbReference>
<dbReference type="InterPro" id="IPR036640">
    <property type="entry name" value="ABC1_TM_sf"/>
</dbReference>
<dbReference type="InterPro" id="IPR003439">
    <property type="entry name" value="ABC_transporter-like_ATP-bd"/>
</dbReference>
<dbReference type="InterPro" id="IPR017871">
    <property type="entry name" value="ABC_transporter-like_CS"/>
</dbReference>
<dbReference type="InterPro" id="IPR010132">
    <property type="entry name" value="ATPase_T1SS_HlyB"/>
</dbReference>
<dbReference type="InterPro" id="IPR027417">
    <property type="entry name" value="P-loop_NTPase"/>
</dbReference>
<dbReference type="InterPro" id="IPR005074">
    <property type="entry name" value="Peptidase_C39"/>
</dbReference>
<dbReference type="InterPro" id="IPR039395">
    <property type="entry name" value="Peptidase_C39-like_A"/>
</dbReference>
<dbReference type="InterPro" id="IPR039421">
    <property type="entry name" value="Type_1_exporter"/>
</dbReference>
<dbReference type="NCBIfam" id="TIGR01846">
    <property type="entry name" value="type_I_sec_HlyB"/>
    <property type="match status" value="1"/>
</dbReference>
<dbReference type="PANTHER" id="PTHR24221">
    <property type="entry name" value="ATP-BINDING CASSETTE SUB-FAMILY B"/>
    <property type="match status" value="1"/>
</dbReference>
<dbReference type="PANTHER" id="PTHR24221:SF647">
    <property type="entry name" value="BLL6336 PROTEIN"/>
    <property type="match status" value="1"/>
</dbReference>
<dbReference type="Pfam" id="PF00664">
    <property type="entry name" value="ABC_membrane"/>
    <property type="match status" value="1"/>
</dbReference>
<dbReference type="Pfam" id="PF00005">
    <property type="entry name" value="ABC_tran"/>
    <property type="match status" value="1"/>
</dbReference>
<dbReference type="Pfam" id="PF03412">
    <property type="entry name" value="Peptidase_C39"/>
    <property type="match status" value="1"/>
</dbReference>
<dbReference type="SMART" id="SM00382">
    <property type="entry name" value="AAA"/>
    <property type="match status" value="1"/>
</dbReference>
<dbReference type="SUPFAM" id="SSF90123">
    <property type="entry name" value="ABC transporter transmembrane region"/>
    <property type="match status" value="1"/>
</dbReference>
<dbReference type="SUPFAM" id="SSF52540">
    <property type="entry name" value="P-loop containing nucleoside triphosphate hydrolases"/>
    <property type="match status" value="1"/>
</dbReference>
<dbReference type="PROSITE" id="PS50929">
    <property type="entry name" value="ABC_TM1F"/>
    <property type="match status" value="1"/>
</dbReference>
<dbReference type="PROSITE" id="PS00211">
    <property type="entry name" value="ABC_TRANSPORTER_1"/>
    <property type="match status" value="1"/>
</dbReference>
<dbReference type="PROSITE" id="PS50893">
    <property type="entry name" value="ABC_TRANSPORTER_2"/>
    <property type="match status" value="1"/>
</dbReference>
<dbReference type="PROSITE" id="PS50990">
    <property type="entry name" value="PEPTIDASE_C39"/>
    <property type="match status" value="1"/>
</dbReference>
<evidence type="ECO:0000250" key="1"/>
<evidence type="ECO:0000255" key="2">
    <source>
        <dbReference type="PROSITE-ProRule" id="PRU00362"/>
    </source>
</evidence>
<evidence type="ECO:0000255" key="3">
    <source>
        <dbReference type="PROSITE-ProRule" id="PRU00434"/>
    </source>
</evidence>
<evidence type="ECO:0000255" key="4">
    <source>
        <dbReference type="PROSITE-ProRule" id="PRU00441"/>
    </source>
</evidence>
<evidence type="ECO:0000305" key="5"/>
<organism>
    <name type="scientific">Mannheimia haemolytica</name>
    <name type="common">Pasteurella haemolytica</name>
    <dbReference type="NCBI Taxonomy" id="75985"/>
    <lineage>
        <taxon>Bacteria</taxon>
        <taxon>Pseudomonadati</taxon>
        <taxon>Pseudomonadota</taxon>
        <taxon>Gammaproteobacteria</taxon>
        <taxon>Pasteurellales</taxon>
        <taxon>Pasteurellaceae</taxon>
        <taxon>Mannheimia</taxon>
    </lineage>
</organism>
<feature type="chain" id="PRO_0000092380" description="Leukotoxin translocation ATP-binding protein LktB">
    <location>
        <begin position="1"/>
        <end position="708"/>
    </location>
</feature>
<feature type="transmembrane region" description="Helical" evidence="4">
    <location>
        <begin position="159"/>
        <end position="179"/>
    </location>
</feature>
<feature type="transmembrane region" description="Helical" evidence="4">
    <location>
        <begin position="192"/>
        <end position="212"/>
    </location>
</feature>
<feature type="transmembrane region" description="Helical" evidence="4">
    <location>
        <begin position="270"/>
        <end position="290"/>
    </location>
</feature>
<feature type="transmembrane region" description="Helical" evidence="4">
    <location>
        <begin position="296"/>
        <end position="316"/>
    </location>
</feature>
<feature type="transmembrane region" description="Helical" evidence="4">
    <location>
        <begin position="389"/>
        <end position="409"/>
    </location>
</feature>
<feature type="domain" description="Peptidase C39" evidence="2">
    <location>
        <begin position="1"/>
        <end position="126"/>
    </location>
</feature>
<feature type="domain" description="ABC transmembrane type-1" evidence="4">
    <location>
        <begin position="155"/>
        <end position="437"/>
    </location>
</feature>
<feature type="domain" description="ABC transporter" evidence="2 3">
    <location>
        <begin position="469"/>
        <end position="704"/>
    </location>
</feature>
<feature type="binding site" evidence="2 3">
    <location>
        <begin position="503"/>
        <end position="510"/>
    </location>
    <ligand>
        <name>ATP</name>
        <dbReference type="ChEBI" id="CHEBI:30616"/>
    </ligand>
</feature>
<gene>
    <name type="primary">lktB</name>
</gene>